<gene>
    <name evidence="1" type="primary">hisA</name>
    <name type="ordered locus">LACR_1328</name>
</gene>
<proteinExistence type="inferred from homology"/>
<comment type="catalytic activity">
    <reaction evidence="1">
        <text>1-(5-phospho-beta-D-ribosyl)-5-[(5-phospho-beta-D-ribosylamino)methylideneamino]imidazole-4-carboxamide = 5-[(5-phospho-1-deoxy-D-ribulos-1-ylimino)methylamino]-1-(5-phospho-beta-D-ribosyl)imidazole-4-carboxamide</text>
        <dbReference type="Rhea" id="RHEA:15469"/>
        <dbReference type="ChEBI" id="CHEBI:58435"/>
        <dbReference type="ChEBI" id="CHEBI:58525"/>
        <dbReference type="EC" id="5.3.1.16"/>
    </reaction>
</comment>
<comment type="pathway">
    <text evidence="1">Amino-acid biosynthesis; L-histidine biosynthesis; L-histidine from 5-phospho-alpha-D-ribose 1-diphosphate: step 4/9.</text>
</comment>
<comment type="subcellular location">
    <subcellularLocation>
        <location evidence="1">Cytoplasm</location>
    </subcellularLocation>
</comment>
<comment type="similarity">
    <text evidence="1">Belongs to the HisA/HisF family.</text>
</comment>
<evidence type="ECO:0000255" key="1">
    <source>
        <dbReference type="HAMAP-Rule" id="MF_01014"/>
    </source>
</evidence>
<feature type="chain" id="PRO_0000290485" description="1-(5-phosphoribosyl)-5-[(5-phosphoribosylamino)methylideneamino] imidazole-4-carboxamide isomerase">
    <location>
        <begin position="1"/>
        <end position="246"/>
    </location>
</feature>
<feature type="active site" description="Proton acceptor" evidence="1">
    <location>
        <position position="8"/>
    </location>
</feature>
<feature type="active site" description="Proton donor" evidence="1">
    <location>
        <position position="131"/>
    </location>
</feature>
<organism>
    <name type="scientific">Lactococcus lactis subsp. cremoris (strain SK11)</name>
    <dbReference type="NCBI Taxonomy" id="272622"/>
    <lineage>
        <taxon>Bacteria</taxon>
        <taxon>Bacillati</taxon>
        <taxon>Bacillota</taxon>
        <taxon>Bacilli</taxon>
        <taxon>Lactobacillales</taxon>
        <taxon>Streptococcaceae</taxon>
        <taxon>Lactococcus</taxon>
        <taxon>Lactococcus cremoris subsp. cremoris</taxon>
    </lineage>
</organism>
<reference key="1">
    <citation type="journal article" date="2006" name="Proc. Natl. Acad. Sci. U.S.A.">
        <title>Comparative genomics of the lactic acid bacteria.</title>
        <authorList>
            <person name="Makarova K.S."/>
            <person name="Slesarev A."/>
            <person name="Wolf Y.I."/>
            <person name="Sorokin A."/>
            <person name="Mirkin B."/>
            <person name="Koonin E.V."/>
            <person name="Pavlov A."/>
            <person name="Pavlova N."/>
            <person name="Karamychev V."/>
            <person name="Polouchine N."/>
            <person name="Shakhova V."/>
            <person name="Grigoriev I."/>
            <person name="Lou Y."/>
            <person name="Rohksar D."/>
            <person name="Lucas S."/>
            <person name="Huang K."/>
            <person name="Goodstein D.M."/>
            <person name="Hawkins T."/>
            <person name="Plengvidhya V."/>
            <person name="Welker D."/>
            <person name="Hughes J."/>
            <person name="Goh Y."/>
            <person name="Benson A."/>
            <person name="Baldwin K."/>
            <person name="Lee J.-H."/>
            <person name="Diaz-Muniz I."/>
            <person name="Dosti B."/>
            <person name="Smeianov V."/>
            <person name="Wechter W."/>
            <person name="Barabote R."/>
            <person name="Lorca G."/>
            <person name="Altermann E."/>
            <person name="Barrangou R."/>
            <person name="Ganesan B."/>
            <person name="Xie Y."/>
            <person name="Rawsthorne H."/>
            <person name="Tamir D."/>
            <person name="Parker C."/>
            <person name="Breidt F."/>
            <person name="Broadbent J.R."/>
            <person name="Hutkins R."/>
            <person name="O'Sullivan D."/>
            <person name="Steele J."/>
            <person name="Unlu G."/>
            <person name="Saier M.H. Jr."/>
            <person name="Klaenhammer T."/>
            <person name="Richardson P."/>
            <person name="Kozyavkin S."/>
            <person name="Weimer B.C."/>
            <person name="Mills D.A."/>
        </authorList>
    </citation>
    <scope>NUCLEOTIDE SEQUENCE [LARGE SCALE GENOMIC DNA]</scope>
    <source>
        <strain>SK11</strain>
    </source>
</reference>
<dbReference type="EC" id="5.3.1.16" evidence="1"/>
<dbReference type="EMBL" id="CP000425">
    <property type="protein sequence ID" value="ABJ72852.1"/>
    <property type="molecule type" value="Genomic_DNA"/>
</dbReference>
<dbReference type="RefSeq" id="WP_011676147.1">
    <property type="nucleotide sequence ID" value="NC_008527.1"/>
</dbReference>
<dbReference type="SMR" id="Q02YX0"/>
<dbReference type="GeneID" id="61109470"/>
<dbReference type="KEGG" id="llc:LACR_1328"/>
<dbReference type="HOGENOM" id="CLU_048577_1_2_9"/>
<dbReference type="UniPathway" id="UPA00031">
    <property type="reaction ID" value="UER00009"/>
</dbReference>
<dbReference type="Proteomes" id="UP000000240">
    <property type="component" value="Chromosome"/>
</dbReference>
<dbReference type="GO" id="GO:0005737">
    <property type="term" value="C:cytoplasm"/>
    <property type="evidence" value="ECO:0007669"/>
    <property type="project" value="UniProtKB-SubCell"/>
</dbReference>
<dbReference type="GO" id="GO:0003949">
    <property type="term" value="F:1-(5-phosphoribosyl)-5-[(5-phosphoribosylamino)methylideneamino]imidazole-4-carboxamide isomerase activity"/>
    <property type="evidence" value="ECO:0007669"/>
    <property type="project" value="UniProtKB-UniRule"/>
</dbReference>
<dbReference type="GO" id="GO:0000105">
    <property type="term" value="P:L-histidine biosynthetic process"/>
    <property type="evidence" value="ECO:0007669"/>
    <property type="project" value="UniProtKB-UniRule"/>
</dbReference>
<dbReference type="GO" id="GO:0000162">
    <property type="term" value="P:L-tryptophan biosynthetic process"/>
    <property type="evidence" value="ECO:0007669"/>
    <property type="project" value="TreeGrafter"/>
</dbReference>
<dbReference type="CDD" id="cd04732">
    <property type="entry name" value="HisA"/>
    <property type="match status" value="1"/>
</dbReference>
<dbReference type="FunFam" id="3.20.20.70:FF:000009">
    <property type="entry name" value="1-(5-phosphoribosyl)-5-[(5-phosphoribosylamino)methylideneamino] imidazole-4-carboxamide isomerase"/>
    <property type="match status" value="1"/>
</dbReference>
<dbReference type="Gene3D" id="3.20.20.70">
    <property type="entry name" value="Aldolase class I"/>
    <property type="match status" value="1"/>
</dbReference>
<dbReference type="HAMAP" id="MF_01014">
    <property type="entry name" value="HisA"/>
    <property type="match status" value="1"/>
</dbReference>
<dbReference type="InterPro" id="IPR013785">
    <property type="entry name" value="Aldolase_TIM"/>
</dbReference>
<dbReference type="InterPro" id="IPR006062">
    <property type="entry name" value="His_biosynth"/>
</dbReference>
<dbReference type="InterPro" id="IPR006063">
    <property type="entry name" value="HisA_bact_arch"/>
</dbReference>
<dbReference type="InterPro" id="IPR044524">
    <property type="entry name" value="Isoase_HisA-like"/>
</dbReference>
<dbReference type="InterPro" id="IPR023016">
    <property type="entry name" value="Isoase_HisA-like_bact"/>
</dbReference>
<dbReference type="InterPro" id="IPR011060">
    <property type="entry name" value="RibuloseP-bd_barrel"/>
</dbReference>
<dbReference type="NCBIfam" id="TIGR00007">
    <property type="entry name" value="1-(5-phosphoribosyl)-5-[(5-phosphoribosylamino)methylideneamino]imidazole-4-carboxamide isomerase"/>
    <property type="match status" value="1"/>
</dbReference>
<dbReference type="PANTHER" id="PTHR43090">
    <property type="entry name" value="1-(5-PHOSPHORIBOSYL)-5-[(5-PHOSPHORIBOSYLAMINO)METHYLIDENEAMINO] IMIDAZOLE-4-CARBOXAMIDE ISOMERASE"/>
    <property type="match status" value="1"/>
</dbReference>
<dbReference type="PANTHER" id="PTHR43090:SF2">
    <property type="entry name" value="1-(5-PHOSPHORIBOSYL)-5-[(5-PHOSPHORIBOSYLAMINO)METHYLIDENEAMINO] IMIDAZOLE-4-CARBOXAMIDE ISOMERASE"/>
    <property type="match status" value="1"/>
</dbReference>
<dbReference type="Pfam" id="PF00977">
    <property type="entry name" value="His_biosynth"/>
    <property type="match status" value="1"/>
</dbReference>
<dbReference type="SUPFAM" id="SSF51366">
    <property type="entry name" value="Ribulose-phoshate binding barrel"/>
    <property type="match status" value="1"/>
</dbReference>
<sequence length="246" mass="27398">MEIIPAIDLQNGEAVRLYKGDYDKKTVYSKNPLEIAQKFEQMGAKYLHLVDLDGAKLGQTRNLEIVRKIKDQTNLKIEIGGGIRNLDTVSLYLEQIGVERVILGTAAAEKPDFLKELLVKYGLSRIVVGVDIREGFVSTSGWLEKTTLPYLSFLKDLEKIGVKTVIVTDISKDGTLTGPNFELYDEISKETSLDVIVSGGVKDSSDIQRAADSDFYGIIVGKAYYEGKINLEKEFNHANKKNYPLS</sequence>
<keyword id="KW-0028">Amino-acid biosynthesis</keyword>
<keyword id="KW-0963">Cytoplasm</keyword>
<keyword id="KW-0368">Histidine biosynthesis</keyword>
<keyword id="KW-0413">Isomerase</keyword>
<accession>Q02YX0</accession>
<protein>
    <recommendedName>
        <fullName evidence="1">1-(5-phosphoribosyl)-5-[(5-phosphoribosylamino)methylideneamino] imidazole-4-carboxamide isomerase</fullName>
        <ecNumber evidence="1">5.3.1.16</ecNumber>
    </recommendedName>
    <alternativeName>
        <fullName evidence="1">Phosphoribosylformimino-5-aminoimidazole carboxamide ribotide isomerase</fullName>
    </alternativeName>
</protein>
<name>HIS4_LACLS</name>